<proteinExistence type="evidence at transcript level"/>
<reference key="1">
    <citation type="journal article" date="1995" name="J. Cell. Biochem.">
        <title>Noncoordinate changes in the steady-state mRNA expressed from aldolase A and aldolase C genes during differentiation of chicken myoblasts.</title>
        <authorList>
            <person name="Meighan-Mantha R.L."/>
            <person name="Tolan D.R."/>
        </authorList>
    </citation>
    <scope>NUCLEOTIDE SEQUENCE [MRNA]</scope>
    <source>
        <tissue>Brain</tissue>
    </source>
</reference>
<gene>
    <name type="primary">ALDOC</name>
</gene>
<evidence type="ECO:0000305" key="1"/>
<protein>
    <recommendedName>
        <fullName>Fructose-bisphosphate aldolase C</fullName>
        <ecNumber>4.1.2.13</ecNumber>
    </recommendedName>
    <alternativeName>
        <fullName>Brain-type aldolase</fullName>
    </alternativeName>
</protein>
<sequence length="137" mass="14438">LLKPNMVTPGHSCPTKYSPEEIAMATVTALRRTVPPAVPGVTFLSGGQSEEEASINLNAINTCPLVRPWALTFSYGRALQASALSAWRGQRDNANAATEEFVKRAEVNGLAALGKYEGSGDDSGAAGQSLYVANHAY</sequence>
<organism>
    <name type="scientific">Gallus gallus</name>
    <name type="common">Chicken</name>
    <dbReference type="NCBI Taxonomy" id="9031"/>
    <lineage>
        <taxon>Eukaryota</taxon>
        <taxon>Metazoa</taxon>
        <taxon>Chordata</taxon>
        <taxon>Craniata</taxon>
        <taxon>Vertebrata</taxon>
        <taxon>Euteleostomi</taxon>
        <taxon>Archelosauria</taxon>
        <taxon>Archosauria</taxon>
        <taxon>Dinosauria</taxon>
        <taxon>Saurischia</taxon>
        <taxon>Theropoda</taxon>
        <taxon>Coelurosauria</taxon>
        <taxon>Aves</taxon>
        <taxon>Neognathae</taxon>
        <taxon>Galloanserae</taxon>
        <taxon>Galliformes</taxon>
        <taxon>Phasianidae</taxon>
        <taxon>Phasianinae</taxon>
        <taxon>Gallus</taxon>
    </lineage>
</organism>
<dbReference type="EC" id="4.1.2.13"/>
<dbReference type="EMBL" id="L25375">
    <property type="protein sequence ID" value="AAA48589.1"/>
    <property type="molecule type" value="mRNA"/>
</dbReference>
<dbReference type="EMBL" id="S78291">
    <property type="protein sequence ID" value="AAB34480.1"/>
    <property type="molecule type" value="mRNA"/>
</dbReference>
<dbReference type="PIR" id="I51292">
    <property type="entry name" value="I51292"/>
</dbReference>
<dbReference type="SMR" id="P53449"/>
<dbReference type="FunCoup" id="P53449">
    <property type="interactions" value="1851"/>
</dbReference>
<dbReference type="STRING" id="9031.ENSGALP00000043256"/>
<dbReference type="GlyGen" id="P53449">
    <property type="glycosylation" value="1 site"/>
</dbReference>
<dbReference type="PaxDb" id="9031-ENSGALP00000043256"/>
<dbReference type="VEuPathDB" id="HostDB:geneid_395492"/>
<dbReference type="eggNOG" id="KOG1557">
    <property type="taxonomic scope" value="Eukaryota"/>
</dbReference>
<dbReference type="HOGENOM" id="CLU_031243_0_0_1"/>
<dbReference type="InParanoid" id="P53449"/>
<dbReference type="OrthoDB" id="36455at2759"/>
<dbReference type="PhylomeDB" id="P53449"/>
<dbReference type="BRENDA" id="4.1.2.13">
    <property type="organism ID" value="1306"/>
</dbReference>
<dbReference type="Reactome" id="R-GGA-352875">
    <property type="pathway name" value="Gluconeogenesis"/>
</dbReference>
<dbReference type="Reactome" id="R-GGA-352882">
    <property type="pathway name" value="Glycolysis"/>
</dbReference>
<dbReference type="UniPathway" id="UPA00109">
    <property type="reaction ID" value="UER00183"/>
</dbReference>
<dbReference type="Proteomes" id="UP000000539">
    <property type="component" value="Unassembled WGS sequence"/>
</dbReference>
<dbReference type="GO" id="GO:0005829">
    <property type="term" value="C:cytosol"/>
    <property type="evidence" value="ECO:0000304"/>
    <property type="project" value="Reactome"/>
</dbReference>
<dbReference type="GO" id="GO:0004332">
    <property type="term" value="F:fructose-bisphosphate aldolase activity"/>
    <property type="evidence" value="ECO:0000250"/>
    <property type="project" value="UniProtKB"/>
</dbReference>
<dbReference type="GO" id="GO:0030388">
    <property type="term" value="P:fructose 1,6-bisphosphate metabolic process"/>
    <property type="evidence" value="ECO:0000250"/>
    <property type="project" value="UniProtKB"/>
</dbReference>
<dbReference type="GO" id="GO:0006094">
    <property type="term" value="P:gluconeogenesis"/>
    <property type="evidence" value="ECO:0000304"/>
    <property type="project" value="Reactome"/>
</dbReference>
<dbReference type="GO" id="GO:0006096">
    <property type="term" value="P:glycolytic process"/>
    <property type="evidence" value="ECO:0000304"/>
    <property type="project" value="Reactome"/>
</dbReference>
<dbReference type="Gene3D" id="3.20.20.70">
    <property type="entry name" value="Aldolase class I"/>
    <property type="match status" value="1"/>
</dbReference>
<dbReference type="InterPro" id="IPR013785">
    <property type="entry name" value="Aldolase_TIM"/>
</dbReference>
<dbReference type="InterPro" id="IPR000741">
    <property type="entry name" value="FBA_I"/>
</dbReference>
<dbReference type="PANTHER" id="PTHR11627">
    <property type="entry name" value="FRUCTOSE-BISPHOSPHATE ALDOLASE"/>
    <property type="match status" value="1"/>
</dbReference>
<dbReference type="Pfam" id="PF00274">
    <property type="entry name" value="Glycolytic"/>
    <property type="match status" value="1"/>
</dbReference>
<dbReference type="SUPFAM" id="SSF51569">
    <property type="entry name" value="Aldolase"/>
    <property type="match status" value="1"/>
</dbReference>
<accession>P53449</accession>
<feature type="chain" id="PRO_0000216952" description="Fructose-bisphosphate aldolase C">
    <location>
        <begin position="1" status="less than"/>
        <end position="137"/>
    </location>
</feature>
<feature type="active site" description="Schiff-base intermediate with dihydroxyacetone-P">
    <location>
        <position position="3"/>
    </location>
</feature>
<feature type="site" description="Necessary for preference for fructose 1,6-bisphosphate over fructose 1-phosphate">
    <location>
        <position position="137"/>
    </location>
</feature>
<feature type="non-terminal residue">
    <location>
        <position position="1"/>
    </location>
</feature>
<comment type="catalytic activity">
    <reaction>
        <text>beta-D-fructose 1,6-bisphosphate = D-glyceraldehyde 3-phosphate + dihydroxyacetone phosphate</text>
        <dbReference type="Rhea" id="RHEA:14729"/>
        <dbReference type="ChEBI" id="CHEBI:32966"/>
        <dbReference type="ChEBI" id="CHEBI:57642"/>
        <dbReference type="ChEBI" id="CHEBI:59776"/>
        <dbReference type="EC" id="4.1.2.13"/>
    </reaction>
</comment>
<comment type="pathway">
    <text>Carbohydrate degradation; glycolysis; D-glyceraldehyde 3-phosphate and glycerone phosphate from D-glucose: step 4/4.</text>
</comment>
<comment type="subunit">
    <text>Homotetramer.</text>
</comment>
<comment type="miscellaneous">
    <text>In vertebrates, three forms of this ubiquitous glycolytic enzyme are found, aldolase A in muscle, aldolase B in liver and aldolase C in brain.</text>
</comment>
<comment type="similarity">
    <text evidence="1">Belongs to the class I fructose-bisphosphate aldolase family.</text>
</comment>
<keyword id="KW-0324">Glycolysis</keyword>
<keyword id="KW-0456">Lyase</keyword>
<keyword id="KW-1185">Reference proteome</keyword>
<keyword id="KW-0704">Schiff base</keyword>
<name>ALDOC_CHICK</name>